<feature type="chain" id="PRO_0000264226" description="Transcriptional repressor NrdR">
    <location>
        <begin position="1"/>
        <end position="168"/>
    </location>
</feature>
<feature type="domain" description="ATP-cone" evidence="1">
    <location>
        <begin position="49"/>
        <end position="139"/>
    </location>
</feature>
<feature type="zinc finger region" evidence="1">
    <location>
        <begin position="3"/>
        <end position="34"/>
    </location>
</feature>
<feature type="region of interest" description="Disordered" evidence="2">
    <location>
        <begin position="1"/>
        <end position="21"/>
    </location>
</feature>
<feature type="compositionally biased region" description="Basic and acidic residues" evidence="2">
    <location>
        <begin position="7"/>
        <end position="20"/>
    </location>
</feature>
<dbReference type="EMBL" id="CP000100">
    <property type="protein sequence ID" value="ABB56727.1"/>
    <property type="molecule type" value="Genomic_DNA"/>
</dbReference>
<dbReference type="RefSeq" id="WP_011243147.1">
    <property type="nucleotide sequence ID" value="NZ_JACJTX010000005.1"/>
</dbReference>
<dbReference type="SMR" id="Q31QE2"/>
<dbReference type="STRING" id="1140.Synpcc7942_0695"/>
<dbReference type="PaxDb" id="1140-Synpcc7942_0695"/>
<dbReference type="GeneID" id="72429529"/>
<dbReference type="KEGG" id="syf:Synpcc7942_0695"/>
<dbReference type="eggNOG" id="COG1327">
    <property type="taxonomic scope" value="Bacteria"/>
</dbReference>
<dbReference type="HOGENOM" id="CLU_108412_0_0_3"/>
<dbReference type="OrthoDB" id="9807461at2"/>
<dbReference type="BioCyc" id="SYNEL:SYNPCC7942_0695-MONOMER"/>
<dbReference type="Proteomes" id="UP000889800">
    <property type="component" value="Chromosome"/>
</dbReference>
<dbReference type="GO" id="GO:0005524">
    <property type="term" value="F:ATP binding"/>
    <property type="evidence" value="ECO:0007669"/>
    <property type="project" value="UniProtKB-KW"/>
</dbReference>
<dbReference type="GO" id="GO:0003677">
    <property type="term" value="F:DNA binding"/>
    <property type="evidence" value="ECO:0007669"/>
    <property type="project" value="UniProtKB-KW"/>
</dbReference>
<dbReference type="GO" id="GO:0008270">
    <property type="term" value="F:zinc ion binding"/>
    <property type="evidence" value="ECO:0007669"/>
    <property type="project" value="UniProtKB-UniRule"/>
</dbReference>
<dbReference type="GO" id="GO:0045892">
    <property type="term" value="P:negative regulation of DNA-templated transcription"/>
    <property type="evidence" value="ECO:0007669"/>
    <property type="project" value="UniProtKB-UniRule"/>
</dbReference>
<dbReference type="HAMAP" id="MF_00440">
    <property type="entry name" value="NrdR"/>
    <property type="match status" value="1"/>
</dbReference>
<dbReference type="InterPro" id="IPR005144">
    <property type="entry name" value="ATP-cone_dom"/>
</dbReference>
<dbReference type="InterPro" id="IPR055173">
    <property type="entry name" value="NrdR-like_N"/>
</dbReference>
<dbReference type="InterPro" id="IPR003796">
    <property type="entry name" value="RNR_NrdR-like"/>
</dbReference>
<dbReference type="NCBIfam" id="TIGR00244">
    <property type="entry name" value="transcriptional regulator NrdR"/>
    <property type="match status" value="1"/>
</dbReference>
<dbReference type="PANTHER" id="PTHR30455">
    <property type="entry name" value="TRANSCRIPTIONAL REPRESSOR NRDR"/>
    <property type="match status" value="1"/>
</dbReference>
<dbReference type="PANTHER" id="PTHR30455:SF2">
    <property type="entry name" value="TRANSCRIPTIONAL REPRESSOR NRDR"/>
    <property type="match status" value="1"/>
</dbReference>
<dbReference type="Pfam" id="PF03477">
    <property type="entry name" value="ATP-cone"/>
    <property type="match status" value="1"/>
</dbReference>
<dbReference type="Pfam" id="PF22811">
    <property type="entry name" value="Zn_ribbon_NrdR"/>
    <property type="match status" value="1"/>
</dbReference>
<dbReference type="PROSITE" id="PS51161">
    <property type="entry name" value="ATP_CONE"/>
    <property type="match status" value="1"/>
</dbReference>
<accession>Q31QE2</accession>
<name>NRDR_SYNE7</name>
<comment type="function">
    <text evidence="1">Negatively regulates transcription of bacterial ribonucleotide reductase nrd genes and operons by binding to NrdR-boxes.</text>
</comment>
<comment type="cofactor">
    <cofactor evidence="1">
        <name>Zn(2+)</name>
        <dbReference type="ChEBI" id="CHEBI:29105"/>
    </cofactor>
    <text evidence="1">Binds 1 zinc ion.</text>
</comment>
<comment type="similarity">
    <text evidence="1">Belongs to the NrdR family.</text>
</comment>
<reference key="1">
    <citation type="submission" date="2005-08" db="EMBL/GenBank/DDBJ databases">
        <title>Complete sequence of chromosome 1 of Synechococcus elongatus PCC 7942.</title>
        <authorList>
            <consortium name="US DOE Joint Genome Institute"/>
            <person name="Copeland A."/>
            <person name="Lucas S."/>
            <person name="Lapidus A."/>
            <person name="Barry K."/>
            <person name="Detter J.C."/>
            <person name="Glavina T."/>
            <person name="Hammon N."/>
            <person name="Israni S."/>
            <person name="Pitluck S."/>
            <person name="Schmutz J."/>
            <person name="Larimer F."/>
            <person name="Land M."/>
            <person name="Kyrpides N."/>
            <person name="Lykidis A."/>
            <person name="Golden S."/>
            <person name="Richardson P."/>
        </authorList>
    </citation>
    <scope>NUCLEOTIDE SEQUENCE [LARGE SCALE GENOMIC DNA]</scope>
    <source>
        <strain>ATCC 33912 / PCC 7942 / FACHB-805</strain>
    </source>
</reference>
<sequence length="168" mass="19106">MQCPACRHTDSRVLESRSSESGRSVRRRRECLSCGHRFTTYERVEFVPISVIKRNGDRESFDRSKLLRGIVRACEKTGVSAQQMDLLVDEIEGTLQQRSSRDVQSSEIGEMVLQQIGRLSEVAYIRFASVYRQFRGVRDFVETLDRLQDLSRDEVGDVPAAVTSLTSA</sequence>
<protein>
    <recommendedName>
        <fullName evidence="1">Transcriptional repressor NrdR</fullName>
    </recommendedName>
</protein>
<gene>
    <name evidence="1" type="primary">nrdR</name>
    <name type="ordered locus">Synpcc7942_0695</name>
</gene>
<organism>
    <name type="scientific">Synechococcus elongatus (strain ATCC 33912 / PCC 7942 / FACHB-805)</name>
    <name type="common">Anacystis nidulans R2</name>
    <dbReference type="NCBI Taxonomy" id="1140"/>
    <lineage>
        <taxon>Bacteria</taxon>
        <taxon>Bacillati</taxon>
        <taxon>Cyanobacteriota</taxon>
        <taxon>Cyanophyceae</taxon>
        <taxon>Synechococcales</taxon>
        <taxon>Synechococcaceae</taxon>
        <taxon>Synechococcus</taxon>
    </lineage>
</organism>
<proteinExistence type="inferred from homology"/>
<keyword id="KW-0067">ATP-binding</keyword>
<keyword id="KW-0238">DNA-binding</keyword>
<keyword id="KW-0479">Metal-binding</keyword>
<keyword id="KW-0547">Nucleotide-binding</keyword>
<keyword id="KW-1185">Reference proteome</keyword>
<keyword id="KW-0678">Repressor</keyword>
<keyword id="KW-0804">Transcription</keyword>
<keyword id="KW-0805">Transcription regulation</keyword>
<keyword id="KW-0862">Zinc</keyword>
<keyword id="KW-0863">Zinc-finger</keyword>
<evidence type="ECO:0000255" key="1">
    <source>
        <dbReference type="HAMAP-Rule" id="MF_00440"/>
    </source>
</evidence>
<evidence type="ECO:0000256" key="2">
    <source>
        <dbReference type="SAM" id="MobiDB-lite"/>
    </source>
</evidence>